<sequence>MQFFADTAEIDDIKELAATGLLDGVTTNPSLIHKSGRDFIEVTKEICGITDGPVSAEVVALDHATMMKEADKLRAIADNVCIKVPLTIDGLKTCKALSDDGTMVNVTLCFSANQALLAAKAGATFVSPFVGRHDDNGFNGMELIRDIRTIYDNYAFETEILVASVRHTTHVLEAALIGADVMTAPPKVIMALANHVLTNKGIEGFLKDWEATGQSIL</sequence>
<keyword id="KW-0963">Cytoplasm</keyword>
<keyword id="KW-0570">Pentose shunt</keyword>
<keyword id="KW-1185">Reference proteome</keyword>
<keyword id="KW-0704">Schiff base</keyword>
<keyword id="KW-0808">Transferase</keyword>
<reference key="1">
    <citation type="journal article" date="2009" name="J. Bacteriol.">
        <title>Complete genome sequence of Erythrobacter litoralis HTCC2594.</title>
        <authorList>
            <person name="Oh H.M."/>
            <person name="Giovannoni S.J."/>
            <person name="Ferriera S."/>
            <person name="Johnson J."/>
            <person name="Cho J.C."/>
        </authorList>
    </citation>
    <scope>NUCLEOTIDE SEQUENCE [LARGE SCALE GENOMIC DNA]</scope>
    <source>
        <strain>HTCC2594</strain>
    </source>
</reference>
<proteinExistence type="inferred from homology"/>
<gene>
    <name evidence="1" type="primary">tal</name>
    <name type="ordered locus">ELI_08705</name>
</gene>
<dbReference type="EC" id="2.2.1.2" evidence="1"/>
<dbReference type="EMBL" id="CP000157">
    <property type="protein sequence ID" value="ABC63833.1"/>
    <property type="molecule type" value="Genomic_DNA"/>
</dbReference>
<dbReference type="RefSeq" id="WP_011414663.1">
    <property type="nucleotide sequence ID" value="NC_007722.1"/>
</dbReference>
<dbReference type="SMR" id="Q2N908"/>
<dbReference type="STRING" id="314225.ELI_08705"/>
<dbReference type="KEGG" id="eli:ELI_08705"/>
<dbReference type="eggNOG" id="COG0176">
    <property type="taxonomic scope" value="Bacteria"/>
</dbReference>
<dbReference type="HOGENOM" id="CLU_079764_0_0_5"/>
<dbReference type="OrthoDB" id="9807051at2"/>
<dbReference type="UniPathway" id="UPA00115">
    <property type="reaction ID" value="UER00414"/>
</dbReference>
<dbReference type="Proteomes" id="UP000008808">
    <property type="component" value="Chromosome"/>
</dbReference>
<dbReference type="GO" id="GO:0005737">
    <property type="term" value="C:cytoplasm"/>
    <property type="evidence" value="ECO:0007669"/>
    <property type="project" value="UniProtKB-SubCell"/>
</dbReference>
<dbReference type="GO" id="GO:0016832">
    <property type="term" value="F:aldehyde-lyase activity"/>
    <property type="evidence" value="ECO:0007669"/>
    <property type="project" value="InterPro"/>
</dbReference>
<dbReference type="GO" id="GO:0004801">
    <property type="term" value="F:transaldolase activity"/>
    <property type="evidence" value="ECO:0007669"/>
    <property type="project" value="UniProtKB-UniRule"/>
</dbReference>
<dbReference type="GO" id="GO:0005975">
    <property type="term" value="P:carbohydrate metabolic process"/>
    <property type="evidence" value="ECO:0007669"/>
    <property type="project" value="InterPro"/>
</dbReference>
<dbReference type="GO" id="GO:0006098">
    <property type="term" value="P:pentose-phosphate shunt"/>
    <property type="evidence" value="ECO:0007669"/>
    <property type="project" value="UniProtKB-UniRule"/>
</dbReference>
<dbReference type="CDD" id="cd00956">
    <property type="entry name" value="Transaldolase_FSA"/>
    <property type="match status" value="1"/>
</dbReference>
<dbReference type="FunFam" id="3.20.20.70:FF:000018">
    <property type="entry name" value="Probable transaldolase"/>
    <property type="match status" value="1"/>
</dbReference>
<dbReference type="Gene3D" id="3.20.20.70">
    <property type="entry name" value="Aldolase class I"/>
    <property type="match status" value="1"/>
</dbReference>
<dbReference type="HAMAP" id="MF_00494">
    <property type="entry name" value="Transaldolase_3b"/>
    <property type="match status" value="1"/>
</dbReference>
<dbReference type="InterPro" id="IPR013785">
    <property type="entry name" value="Aldolase_TIM"/>
</dbReference>
<dbReference type="InterPro" id="IPR001585">
    <property type="entry name" value="TAL/FSA"/>
</dbReference>
<dbReference type="InterPro" id="IPR022999">
    <property type="entry name" value="Transaldolase_3B"/>
</dbReference>
<dbReference type="InterPro" id="IPR004731">
    <property type="entry name" value="Transaldolase_3B/F6P_aldolase"/>
</dbReference>
<dbReference type="InterPro" id="IPR018225">
    <property type="entry name" value="Transaldolase_AS"/>
</dbReference>
<dbReference type="InterPro" id="IPR033919">
    <property type="entry name" value="TSA/FSA_arc/bac"/>
</dbReference>
<dbReference type="NCBIfam" id="TIGR00875">
    <property type="entry name" value="fsa_talC_mipB"/>
    <property type="match status" value="1"/>
</dbReference>
<dbReference type="PANTHER" id="PTHR10683:SF40">
    <property type="entry name" value="FRUCTOSE-6-PHOSPHATE ALDOLASE 1-RELATED"/>
    <property type="match status" value="1"/>
</dbReference>
<dbReference type="PANTHER" id="PTHR10683">
    <property type="entry name" value="TRANSALDOLASE"/>
    <property type="match status" value="1"/>
</dbReference>
<dbReference type="Pfam" id="PF00923">
    <property type="entry name" value="TAL_FSA"/>
    <property type="match status" value="1"/>
</dbReference>
<dbReference type="SUPFAM" id="SSF51569">
    <property type="entry name" value="Aldolase"/>
    <property type="match status" value="1"/>
</dbReference>
<dbReference type="PROSITE" id="PS01054">
    <property type="entry name" value="TRANSALDOLASE_1"/>
    <property type="match status" value="1"/>
</dbReference>
<comment type="function">
    <text evidence="1">Transaldolase is important for the balance of metabolites in the pentose-phosphate pathway.</text>
</comment>
<comment type="catalytic activity">
    <reaction evidence="1">
        <text>D-sedoheptulose 7-phosphate + D-glyceraldehyde 3-phosphate = D-erythrose 4-phosphate + beta-D-fructose 6-phosphate</text>
        <dbReference type="Rhea" id="RHEA:17053"/>
        <dbReference type="ChEBI" id="CHEBI:16897"/>
        <dbReference type="ChEBI" id="CHEBI:57483"/>
        <dbReference type="ChEBI" id="CHEBI:57634"/>
        <dbReference type="ChEBI" id="CHEBI:59776"/>
        <dbReference type="EC" id="2.2.1.2"/>
    </reaction>
</comment>
<comment type="pathway">
    <text evidence="1">Carbohydrate degradation; pentose phosphate pathway; D-glyceraldehyde 3-phosphate and beta-D-fructose 6-phosphate from D-ribose 5-phosphate and D-xylulose 5-phosphate (non-oxidative stage): step 2/3.</text>
</comment>
<comment type="subcellular location">
    <subcellularLocation>
        <location evidence="1">Cytoplasm</location>
    </subcellularLocation>
</comment>
<comment type="similarity">
    <text evidence="1">Belongs to the transaldolase family. Type 3B subfamily.</text>
</comment>
<name>TAL_ERYLH</name>
<accession>Q2N908</accession>
<organism>
    <name type="scientific">Erythrobacter litoralis (strain HTCC2594)</name>
    <dbReference type="NCBI Taxonomy" id="314225"/>
    <lineage>
        <taxon>Bacteria</taxon>
        <taxon>Pseudomonadati</taxon>
        <taxon>Pseudomonadota</taxon>
        <taxon>Alphaproteobacteria</taxon>
        <taxon>Sphingomonadales</taxon>
        <taxon>Erythrobacteraceae</taxon>
        <taxon>Erythrobacter/Porphyrobacter group</taxon>
        <taxon>Erythrobacter</taxon>
    </lineage>
</organism>
<feature type="chain" id="PRO_1000126313" description="Probable transaldolase">
    <location>
        <begin position="1"/>
        <end position="217"/>
    </location>
</feature>
<feature type="active site" description="Schiff-base intermediate with substrate" evidence="1">
    <location>
        <position position="83"/>
    </location>
</feature>
<evidence type="ECO:0000255" key="1">
    <source>
        <dbReference type="HAMAP-Rule" id="MF_00494"/>
    </source>
</evidence>
<protein>
    <recommendedName>
        <fullName evidence="1">Probable transaldolase</fullName>
        <ecNumber evidence="1">2.2.1.2</ecNumber>
    </recommendedName>
</protein>